<name>BPPAF_BOTFO</name>
<reference key="1">
    <citation type="journal article" date="2012" name="Mol. Cell. Proteomics">
        <title>Peptidomics of three Bothrops snake venoms: insights into the molecular diversification of proteomes and peptidomes.</title>
        <authorList>
            <person name="Tashima A.K."/>
            <person name="Zelanis A."/>
            <person name="Kitano E.S."/>
            <person name="Ianzer D."/>
            <person name="Melo R.L."/>
            <person name="Rioli V."/>
            <person name="Sant'anna S.S."/>
            <person name="Schenberg A.C."/>
            <person name="Camargo A.C."/>
            <person name="Serrano S.M.T."/>
        </authorList>
    </citation>
    <scope>PROTEIN SEQUENCE</scope>
    <scope>SYNTHESIS</scope>
    <scope>FUNCTION</scope>
    <scope>PYROGLUTAMATE FORMATION AT GLN-1</scope>
    <scope>MASS SPECTROMETRY</scope>
    <source>
        <tissue>Venom</tissue>
    </source>
</reference>
<protein>
    <recommendedName>
        <fullName>Bradykinin-potentiating peptide 10f</fullName>
        <shortName>BPP-10f</shortName>
    </recommendedName>
</protein>
<organism>
    <name type="scientific">Bothrops fonsecai</name>
    <name type="common">Fonseca's lancehead</name>
    <name type="synonym">Rhinocerophis fonsecai</name>
    <dbReference type="NCBI Taxonomy" id="157549"/>
    <lineage>
        <taxon>Eukaryota</taxon>
        <taxon>Metazoa</taxon>
        <taxon>Chordata</taxon>
        <taxon>Craniata</taxon>
        <taxon>Vertebrata</taxon>
        <taxon>Euteleostomi</taxon>
        <taxon>Lepidosauria</taxon>
        <taxon>Squamata</taxon>
        <taxon>Bifurcata</taxon>
        <taxon>Unidentata</taxon>
        <taxon>Episquamata</taxon>
        <taxon>Toxicofera</taxon>
        <taxon>Serpentes</taxon>
        <taxon>Colubroidea</taxon>
        <taxon>Viperidae</taxon>
        <taxon>Crotalinae</taxon>
        <taxon>Bothrops</taxon>
    </lineage>
</organism>
<sequence>QRWPSPKVPP</sequence>
<dbReference type="GO" id="GO:0005576">
    <property type="term" value="C:extracellular region"/>
    <property type="evidence" value="ECO:0007669"/>
    <property type="project" value="UniProtKB-SubCell"/>
</dbReference>
<dbReference type="GO" id="GO:0030414">
    <property type="term" value="F:peptidase inhibitor activity"/>
    <property type="evidence" value="ECO:0007669"/>
    <property type="project" value="UniProtKB-KW"/>
</dbReference>
<dbReference type="GO" id="GO:0090729">
    <property type="term" value="F:toxin activity"/>
    <property type="evidence" value="ECO:0007669"/>
    <property type="project" value="UniProtKB-KW"/>
</dbReference>
<dbReference type="GO" id="GO:0008217">
    <property type="term" value="P:regulation of blood pressure"/>
    <property type="evidence" value="ECO:0007669"/>
    <property type="project" value="UniProtKB-KW"/>
</dbReference>
<accession>P0DJK7</accession>
<feature type="peptide" id="PRO_0000421910" description="Bradykinin-potentiating peptide 10f">
    <location>
        <begin position="1"/>
        <end position="10"/>
    </location>
</feature>
<feature type="modified residue" description="Pyrrolidone carboxylic acid" evidence="1">
    <location>
        <position position="1"/>
    </location>
</feature>
<feature type="unsure residue" description="K or Q">
    <location>
        <position position="7"/>
    </location>
</feature>
<proteinExistence type="evidence at protein level"/>
<keyword id="KW-0903">Direct protein sequencing</keyword>
<keyword id="KW-0382">Hypotensive agent</keyword>
<keyword id="KW-0481">Metalloenzyme inhibitor</keyword>
<keyword id="KW-0483">Metalloprotease inhibitor</keyword>
<keyword id="KW-0646">Protease inhibitor</keyword>
<keyword id="KW-0873">Pyrrolidone carboxylic acid</keyword>
<keyword id="KW-0964">Secreted</keyword>
<keyword id="KW-0800">Toxin</keyword>
<evidence type="ECO:0000269" key="1">
    <source>
    </source>
</evidence>
<evidence type="ECO:0000305" key="2"/>
<comment type="function">
    <text evidence="1">This peptide evokes transient hypotension (-11 mmHg) similar to that evoked by 0.5 ug of bradykinin, when injected alone into rats. It has a high bradykinin-potentiating effect (101%), when 60 nmol of BPP-10f are coinjected with 0.5 ug of bradykinin into rats. It inhibits angiotensin converting enzyme (ACE) activity with a K(i)app of 2.32 uM.</text>
</comment>
<comment type="subcellular location">
    <subcellularLocation>
        <location>Secreted</location>
    </subcellularLocation>
</comment>
<comment type="tissue specificity">
    <text>Expressed by the venom gland.</text>
</comment>
<comment type="mass spectrometry"/>
<comment type="similarity">
    <text evidence="2">Belongs to the bradykinin-potentiating peptide family.</text>
</comment>